<reference key="1">
    <citation type="journal article" date="2006" name="J. Bacteriol.">
        <title>Complete genome sequence of Yersinia pestis strains Antiqua and Nepal516: evidence of gene reduction in an emerging pathogen.</title>
        <authorList>
            <person name="Chain P.S.G."/>
            <person name="Hu P."/>
            <person name="Malfatti S.A."/>
            <person name="Radnedge L."/>
            <person name="Larimer F."/>
            <person name="Vergez L.M."/>
            <person name="Worsham P."/>
            <person name="Chu M.C."/>
            <person name="Andersen G.L."/>
        </authorList>
    </citation>
    <scope>NUCLEOTIDE SEQUENCE [LARGE SCALE GENOMIC DNA]</scope>
    <source>
        <strain>Antiqua</strain>
    </source>
</reference>
<sequence length="487" mass="52347">MTITPQQLIAMLPLLIVGLTVVVVMLSIAWRRDHFINATLTVIGLNLALLSLYFVGQVGPMDVTPLMRVDGYSMFYTGLVIIASLATSTFAYPWLVGYPDNREEFYLLVLIAALGGILLASANHLASLFLGIELLTLPLFGLIGYAYRQKRSLEASIKYMLLSAAASSFLLFGMALLYAESGSLSFVGLGQSLSDSMVHQPLILAGLGMMIVGLGFKLSLVPFQLWTPDVYQGAPAPVSTFLATASKIAIFAVVMRLFMYAPAADSEAVRLVLSIIAVASILFGNLMAISQTNIKRLLGYSSIAHLGYLLIALVAVQTHELALPLETIGVYLAGYLFSSLGAFGVVSLMSSPYKGPDAESLFSYRGLFWHKPILSAVMTVMMLSLAGIPMTLGFIGKFFVVAMGVSANLWWLTGAVVLGSAIGLYYYLRVTVSLFLSPPQSLVRDTPSNWALTAGGVVVLISAILVLVLGIYPQPLITLVQMAQPLM</sequence>
<dbReference type="EC" id="7.1.1.-" evidence="1"/>
<dbReference type="EMBL" id="CP000308">
    <property type="protein sequence ID" value="ABG14001.1"/>
    <property type="molecule type" value="Genomic_DNA"/>
</dbReference>
<dbReference type="RefSeq" id="WP_002210268.1">
    <property type="nucleotide sequence ID" value="NZ_CP009906.1"/>
</dbReference>
<dbReference type="SMR" id="Q1C6C1"/>
<dbReference type="GeneID" id="57976146"/>
<dbReference type="KEGG" id="ypa:YPA_2035"/>
<dbReference type="Proteomes" id="UP000001971">
    <property type="component" value="Chromosome"/>
</dbReference>
<dbReference type="GO" id="GO:0005886">
    <property type="term" value="C:plasma membrane"/>
    <property type="evidence" value="ECO:0007669"/>
    <property type="project" value="UniProtKB-SubCell"/>
</dbReference>
<dbReference type="GO" id="GO:0008137">
    <property type="term" value="F:NADH dehydrogenase (ubiquinone) activity"/>
    <property type="evidence" value="ECO:0007669"/>
    <property type="project" value="InterPro"/>
</dbReference>
<dbReference type="GO" id="GO:0050136">
    <property type="term" value="F:NADH:ubiquinone reductase (non-electrogenic) activity"/>
    <property type="evidence" value="ECO:0007669"/>
    <property type="project" value="UniProtKB-UniRule"/>
</dbReference>
<dbReference type="GO" id="GO:0048038">
    <property type="term" value="F:quinone binding"/>
    <property type="evidence" value="ECO:0007669"/>
    <property type="project" value="UniProtKB-KW"/>
</dbReference>
<dbReference type="GO" id="GO:0042773">
    <property type="term" value="P:ATP synthesis coupled electron transport"/>
    <property type="evidence" value="ECO:0007669"/>
    <property type="project" value="InterPro"/>
</dbReference>
<dbReference type="HAMAP" id="MF_00445">
    <property type="entry name" value="NDH1_NuoN_1"/>
    <property type="match status" value="1"/>
</dbReference>
<dbReference type="InterPro" id="IPR010096">
    <property type="entry name" value="NADH-Q_OxRdtase_suN/2"/>
</dbReference>
<dbReference type="InterPro" id="IPR001750">
    <property type="entry name" value="ND/Mrp_TM"/>
</dbReference>
<dbReference type="NCBIfam" id="TIGR01770">
    <property type="entry name" value="NDH_I_N"/>
    <property type="match status" value="1"/>
</dbReference>
<dbReference type="NCBIfam" id="NF004439">
    <property type="entry name" value="PRK05777.1-1"/>
    <property type="match status" value="1"/>
</dbReference>
<dbReference type="PANTHER" id="PTHR22773">
    <property type="entry name" value="NADH DEHYDROGENASE"/>
    <property type="match status" value="1"/>
</dbReference>
<dbReference type="Pfam" id="PF00361">
    <property type="entry name" value="Proton_antipo_M"/>
    <property type="match status" value="1"/>
</dbReference>
<protein>
    <recommendedName>
        <fullName evidence="1">NADH-quinone oxidoreductase subunit N</fullName>
        <ecNumber evidence="1">7.1.1.-</ecNumber>
    </recommendedName>
    <alternativeName>
        <fullName evidence="1">NADH dehydrogenase I subunit N</fullName>
    </alternativeName>
    <alternativeName>
        <fullName evidence="1">NDH-1 subunit N</fullName>
    </alternativeName>
</protein>
<organism>
    <name type="scientific">Yersinia pestis bv. Antiqua (strain Antiqua)</name>
    <dbReference type="NCBI Taxonomy" id="360102"/>
    <lineage>
        <taxon>Bacteria</taxon>
        <taxon>Pseudomonadati</taxon>
        <taxon>Pseudomonadota</taxon>
        <taxon>Gammaproteobacteria</taxon>
        <taxon>Enterobacterales</taxon>
        <taxon>Yersiniaceae</taxon>
        <taxon>Yersinia</taxon>
    </lineage>
</organism>
<comment type="function">
    <text evidence="1">NDH-1 shuttles electrons from NADH, via FMN and iron-sulfur (Fe-S) centers, to quinones in the respiratory chain. The immediate electron acceptor for the enzyme in this species is believed to be ubiquinone. Couples the redox reaction to proton translocation (for every two electrons transferred, four hydrogen ions are translocated across the cytoplasmic membrane), and thus conserves the redox energy in a proton gradient.</text>
</comment>
<comment type="catalytic activity">
    <reaction evidence="1">
        <text>a quinone + NADH + 5 H(+)(in) = a quinol + NAD(+) + 4 H(+)(out)</text>
        <dbReference type="Rhea" id="RHEA:57888"/>
        <dbReference type="ChEBI" id="CHEBI:15378"/>
        <dbReference type="ChEBI" id="CHEBI:24646"/>
        <dbReference type="ChEBI" id="CHEBI:57540"/>
        <dbReference type="ChEBI" id="CHEBI:57945"/>
        <dbReference type="ChEBI" id="CHEBI:132124"/>
    </reaction>
</comment>
<comment type="subunit">
    <text evidence="1">NDH-1 is composed of 13 different subunits. Subunits NuoA, H, J, K, L, M, N constitute the membrane sector of the complex.</text>
</comment>
<comment type="subcellular location">
    <subcellularLocation>
        <location evidence="1">Cell inner membrane</location>
        <topology evidence="1">Multi-pass membrane protein</topology>
    </subcellularLocation>
</comment>
<comment type="similarity">
    <text evidence="1">Belongs to the complex I subunit 2 family.</text>
</comment>
<proteinExistence type="inferred from homology"/>
<accession>Q1C6C1</accession>
<keyword id="KW-0997">Cell inner membrane</keyword>
<keyword id="KW-1003">Cell membrane</keyword>
<keyword id="KW-0472">Membrane</keyword>
<keyword id="KW-0520">NAD</keyword>
<keyword id="KW-0874">Quinone</keyword>
<keyword id="KW-1278">Translocase</keyword>
<keyword id="KW-0812">Transmembrane</keyword>
<keyword id="KW-1133">Transmembrane helix</keyword>
<keyword id="KW-0813">Transport</keyword>
<keyword id="KW-0830">Ubiquinone</keyword>
<feature type="chain" id="PRO_1000017381" description="NADH-quinone oxidoreductase subunit N">
    <location>
        <begin position="1"/>
        <end position="487"/>
    </location>
</feature>
<feature type="transmembrane region" description="Helical" evidence="1">
    <location>
        <begin position="8"/>
        <end position="28"/>
    </location>
</feature>
<feature type="transmembrane region" description="Helical" evidence="1">
    <location>
        <begin position="35"/>
        <end position="55"/>
    </location>
</feature>
<feature type="transmembrane region" description="Helical" evidence="1">
    <location>
        <begin position="78"/>
        <end position="98"/>
    </location>
</feature>
<feature type="transmembrane region" description="Helical" evidence="1">
    <location>
        <begin position="104"/>
        <end position="124"/>
    </location>
</feature>
<feature type="transmembrane region" description="Helical" evidence="1">
    <location>
        <begin position="125"/>
        <end position="145"/>
    </location>
</feature>
<feature type="transmembrane region" description="Helical" evidence="1">
    <location>
        <begin position="159"/>
        <end position="179"/>
    </location>
</feature>
<feature type="transmembrane region" description="Helical" evidence="1">
    <location>
        <begin position="203"/>
        <end position="223"/>
    </location>
</feature>
<feature type="transmembrane region" description="Helical" evidence="1">
    <location>
        <begin position="235"/>
        <end position="255"/>
    </location>
</feature>
<feature type="transmembrane region" description="Helical" evidence="1">
    <location>
        <begin position="271"/>
        <end position="291"/>
    </location>
</feature>
<feature type="transmembrane region" description="Helical" evidence="1">
    <location>
        <begin position="297"/>
        <end position="317"/>
    </location>
</feature>
<feature type="transmembrane region" description="Helical" evidence="1">
    <location>
        <begin position="328"/>
        <end position="348"/>
    </location>
</feature>
<feature type="transmembrane region" description="Helical" evidence="1">
    <location>
        <begin position="376"/>
        <end position="396"/>
    </location>
</feature>
<feature type="transmembrane region" description="Helical" evidence="1">
    <location>
        <begin position="409"/>
        <end position="428"/>
    </location>
</feature>
<feature type="transmembrane region" description="Helical" evidence="1">
    <location>
        <begin position="451"/>
        <end position="471"/>
    </location>
</feature>
<name>NUON_YERPA</name>
<evidence type="ECO:0000255" key="1">
    <source>
        <dbReference type="HAMAP-Rule" id="MF_00445"/>
    </source>
</evidence>
<gene>
    <name evidence="1" type="primary">nuoN</name>
    <name type="ordered locus">YPA_2035</name>
</gene>